<evidence type="ECO:0000250" key="1"/>
<evidence type="ECO:0000305" key="2"/>
<proteinExistence type="evidence at transcript level"/>
<sequence length="485" mass="53104">MALLVEKTTSGREYKVKDMSQADFGRLEIELAEVEMPGLMACRTEFGPSQPFKGAKITGSLHMTIQTAVLIETLTALGAEVRWCSCNIFSTQDHAAAAIARDSAAVFAWKGETLQEYWWCTERALDWGPGGGPDLIVDDGGDATLLIHEGVKAEEEFAKNGTIPDPNSTDNAEFQLVLTIIKESLKTDPLKYTKMKERLVGVSEETTTGVKRLYQMQANGTLLFPAINVNDSVTKSKFDNLYGCRHSLPDGLMRATDVMIAGKVALVAGYGDVGKGCAAALKQAGARVIVTEIDPICALQATMEGLQVLTLEDVVSDVDIFVTTTGNKDIIMVDHMRKMKNNAIVCNIGHFDNEIDMLGLETYPGVKRITIKPQTDRWVFPDTNSGIIVLAEGRLMNLGCATGHPSFVMSCSFTNQVIAQLELWNEKSSGKYEKKVYVLPKHLDEKVAALHLGKLGAKLTKLSKDQADYISVPVEGPYKPAHYRY</sequence>
<gene>
    <name type="primary">SAHH</name>
</gene>
<organism>
    <name type="scientific">Nicotiana tabacum</name>
    <name type="common">Common tobacco</name>
    <dbReference type="NCBI Taxonomy" id="4097"/>
    <lineage>
        <taxon>Eukaryota</taxon>
        <taxon>Viridiplantae</taxon>
        <taxon>Streptophyta</taxon>
        <taxon>Embryophyta</taxon>
        <taxon>Tracheophyta</taxon>
        <taxon>Spermatophyta</taxon>
        <taxon>Magnoliopsida</taxon>
        <taxon>eudicotyledons</taxon>
        <taxon>Gunneridae</taxon>
        <taxon>Pentapetalae</taxon>
        <taxon>asterids</taxon>
        <taxon>lamiids</taxon>
        <taxon>Solanales</taxon>
        <taxon>Solanaceae</taxon>
        <taxon>Nicotianoideae</taxon>
        <taxon>Nicotianeae</taxon>
        <taxon>Nicotiana</taxon>
    </lineage>
</organism>
<protein>
    <recommendedName>
        <fullName>Adenosylhomocysteinase</fullName>
        <shortName>AdoHcyase</shortName>
        <ecNumber>3.13.2.1</ecNumber>
    </recommendedName>
    <alternativeName>
        <fullName>Cytokinin-binding protein CBP57</fullName>
    </alternativeName>
    <alternativeName>
        <fullName>S-adenosyl-L-homocysteine hydrolase</fullName>
    </alternativeName>
</protein>
<accession>P68173</accession>
<accession>P50248</accession>
<comment type="function">
    <text evidence="1">Adenosylhomocysteine is a competitive inhibitor of S-adenosyl-L-methionine-dependent methyl transferase reactions; therefore adenosylhomocysteinase may play a key role in the control of methylations via regulation of the intracellular concentration of adenosylhomocysteine.</text>
</comment>
<comment type="catalytic activity">
    <reaction>
        <text>S-adenosyl-L-homocysteine + H2O = L-homocysteine + adenosine</text>
        <dbReference type="Rhea" id="RHEA:21708"/>
        <dbReference type="ChEBI" id="CHEBI:15377"/>
        <dbReference type="ChEBI" id="CHEBI:16335"/>
        <dbReference type="ChEBI" id="CHEBI:57856"/>
        <dbReference type="ChEBI" id="CHEBI:58199"/>
        <dbReference type="EC" id="3.13.2.1"/>
    </reaction>
</comment>
<comment type="cofactor">
    <cofactor evidence="1">
        <name>NAD(+)</name>
        <dbReference type="ChEBI" id="CHEBI:57540"/>
    </cofactor>
    <text evidence="1">Binds 1 NAD(+) per subunit.</text>
</comment>
<comment type="pathway">
    <text>Amino-acid biosynthesis; L-homocysteine biosynthesis; L-homocysteine from S-adenosyl-L-homocysteine: step 1/1.</text>
</comment>
<comment type="similarity">
    <text evidence="2">Belongs to the adenosylhomocysteinase family.</text>
</comment>
<keyword id="KW-0378">Hydrolase</keyword>
<keyword id="KW-0520">NAD</keyword>
<keyword id="KW-0554">One-carbon metabolism</keyword>
<keyword id="KW-1185">Reference proteome</keyword>
<reference key="1">
    <citation type="journal article" date="1996" name="Plant Sci.">
        <title>Inducible expression by plant hormones of S-adenosyl-homocysteine hydrolase gene from Nicotiana tabacum during early flower bud formation in vitro.</title>
        <authorList>
            <person name="Tanaka H."/>
            <person name="Masuta C."/>
            <person name="Kataoka J."/>
            <person name="Kuwata S."/>
            <person name="Koiwai A."/>
            <person name="Noma M."/>
        </authorList>
    </citation>
    <scope>NUCLEOTIDE SEQUENCE</scope>
    <source>
        <strain>cv. Bright Yellow 4</strain>
    </source>
</reference>
<name>SAHH_TOBAC</name>
<feature type="chain" id="PRO_0000116932" description="Adenosylhomocysteinase">
    <location>
        <begin position="1"/>
        <end position="485"/>
    </location>
</feature>
<feature type="binding site" evidence="1">
    <location>
        <position position="64"/>
    </location>
    <ligand>
        <name>substrate</name>
    </ligand>
</feature>
<feature type="binding site" evidence="1">
    <location>
        <position position="139"/>
    </location>
    <ligand>
        <name>substrate</name>
    </ligand>
</feature>
<feature type="binding site" evidence="1">
    <location>
        <position position="205"/>
    </location>
    <ligand>
        <name>substrate</name>
    </ligand>
</feature>
<feature type="binding site" evidence="1">
    <location>
        <begin position="206"/>
        <end position="208"/>
    </location>
    <ligand>
        <name>NAD(+)</name>
        <dbReference type="ChEBI" id="CHEBI:57540"/>
    </ligand>
</feature>
<feature type="binding site" evidence="1">
    <location>
        <position position="235"/>
    </location>
    <ligand>
        <name>substrate</name>
    </ligand>
</feature>
<feature type="binding site" evidence="1">
    <location>
        <position position="239"/>
    </location>
    <ligand>
        <name>substrate</name>
    </ligand>
</feature>
<feature type="binding site" evidence="1">
    <location>
        <position position="240"/>
    </location>
    <ligand>
        <name>NAD(+)</name>
        <dbReference type="ChEBI" id="CHEBI:57540"/>
    </ligand>
</feature>
<feature type="binding site" evidence="1">
    <location>
        <begin position="269"/>
        <end position="274"/>
    </location>
    <ligand>
        <name>NAD(+)</name>
        <dbReference type="ChEBI" id="CHEBI:57540"/>
    </ligand>
</feature>
<feature type="binding site" evidence="1">
    <location>
        <position position="292"/>
    </location>
    <ligand>
        <name>NAD(+)</name>
        <dbReference type="ChEBI" id="CHEBI:57540"/>
    </ligand>
</feature>
<feature type="binding site" evidence="1">
    <location>
        <position position="327"/>
    </location>
    <ligand>
        <name>NAD(+)</name>
        <dbReference type="ChEBI" id="CHEBI:57540"/>
    </ligand>
</feature>
<feature type="binding site" evidence="1">
    <location>
        <begin position="348"/>
        <end position="350"/>
    </location>
    <ligand>
        <name>NAD(+)</name>
        <dbReference type="ChEBI" id="CHEBI:57540"/>
    </ligand>
</feature>
<feature type="binding site" evidence="1">
    <location>
        <position position="397"/>
    </location>
    <ligand>
        <name>NAD(+)</name>
        <dbReference type="ChEBI" id="CHEBI:57540"/>
    </ligand>
</feature>
<dbReference type="EC" id="3.13.2.1"/>
<dbReference type="EMBL" id="D45204">
    <property type="protein sequence ID" value="BAA08142.1"/>
    <property type="molecule type" value="mRNA"/>
</dbReference>
<dbReference type="EMBL" id="D49804">
    <property type="protein sequence ID" value="BAA23164.1"/>
    <property type="molecule type" value="Genomic_DNA"/>
</dbReference>
<dbReference type="RefSeq" id="NP_001312346.1">
    <property type="nucleotide sequence ID" value="NM_001325417.1"/>
</dbReference>
<dbReference type="SMR" id="P68173"/>
<dbReference type="STRING" id="4097.P68173"/>
<dbReference type="PaxDb" id="4097-P68173"/>
<dbReference type="GeneID" id="107786358"/>
<dbReference type="KEGG" id="nta:107786358"/>
<dbReference type="OMA" id="NIACADG"/>
<dbReference type="OrthoDB" id="10007170at2759"/>
<dbReference type="PhylomeDB" id="P68173"/>
<dbReference type="BRENDA" id="3.3.1.1">
    <property type="organism ID" value="3645"/>
</dbReference>
<dbReference type="UniPathway" id="UPA00314">
    <property type="reaction ID" value="UER00076"/>
</dbReference>
<dbReference type="Proteomes" id="UP000084051">
    <property type="component" value="Unplaced"/>
</dbReference>
<dbReference type="GO" id="GO:0005829">
    <property type="term" value="C:cytosol"/>
    <property type="evidence" value="ECO:0000318"/>
    <property type="project" value="GO_Central"/>
</dbReference>
<dbReference type="GO" id="GO:0004013">
    <property type="term" value="F:adenosylhomocysteinase activity"/>
    <property type="evidence" value="ECO:0000318"/>
    <property type="project" value="GO_Central"/>
</dbReference>
<dbReference type="GO" id="GO:0006730">
    <property type="term" value="P:one-carbon metabolic process"/>
    <property type="evidence" value="ECO:0007669"/>
    <property type="project" value="UniProtKB-KW"/>
</dbReference>
<dbReference type="GO" id="GO:0033353">
    <property type="term" value="P:S-adenosylmethionine cycle"/>
    <property type="evidence" value="ECO:0000318"/>
    <property type="project" value="GO_Central"/>
</dbReference>
<dbReference type="CDD" id="cd00401">
    <property type="entry name" value="SAHH"/>
    <property type="match status" value="1"/>
</dbReference>
<dbReference type="FunFam" id="3.40.50.720:FF:000004">
    <property type="entry name" value="Adenosylhomocysteinase"/>
    <property type="match status" value="1"/>
</dbReference>
<dbReference type="Gene3D" id="3.40.50.1480">
    <property type="entry name" value="Adenosylhomocysteinase-like"/>
    <property type="match status" value="1"/>
</dbReference>
<dbReference type="Gene3D" id="3.40.50.720">
    <property type="entry name" value="NAD(P)-binding Rossmann-like Domain"/>
    <property type="match status" value="1"/>
</dbReference>
<dbReference type="HAMAP" id="MF_00563">
    <property type="entry name" value="AdoHcyase"/>
    <property type="match status" value="1"/>
</dbReference>
<dbReference type="InterPro" id="IPR042172">
    <property type="entry name" value="Adenosylhomocyst_ase-like_sf"/>
</dbReference>
<dbReference type="InterPro" id="IPR000043">
    <property type="entry name" value="Adenosylhomocysteinase-like"/>
</dbReference>
<dbReference type="InterPro" id="IPR015878">
    <property type="entry name" value="Ado_hCys_hydrolase_NAD-bd"/>
</dbReference>
<dbReference type="InterPro" id="IPR036291">
    <property type="entry name" value="NAD(P)-bd_dom_sf"/>
</dbReference>
<dbReference type="InterPro" id="IPR020082">
    <property type="entry name" value="S-Ado-L-homoCys_hydrolase_CS"/>
</dbReference>
<dbReference type="NCBIfam" id="TIGR00936">
    <property type="entry name" value="ahcY"/>
    <property type="match status" value="1"/>
</dbReference>
<dbReference type="NCBIfam" id="NF004005">
    <property type="entry name" value="PRK05476.2-3"/>
    <property type="match status" value="1"/>
</dbReference>
<dbReference type="PANTHER" id="PTHR23420">
    <property type="entry name" value="ADENOSYLHOMOCYSTEINASE"/>
    <property type="match status" value="1"/>
</dbReference>
<dbReference type="PANTHER" id="PTHR23420:SF0">
    <property type="entry name" value="ADENOSYLHOMOCYSTEINASE"/>
    <property type="match status" value="1"/>
</dbReference>
<dbReference type="Pfam" id="PF05221">
    <property type="entry name" value="AdoHcyase"/>
    <property type="match status" value="1"/>
</dbReference>
<dbReference type="Pfam" id="PF00670">
    <property type="entry name" value="AdoHcyase_NAD"/>
    <property type="match status" value="1"/>
</dbReference>
<dbReference type="PIRSF" id="PIRSF001109">
    <property type="entry name" value="Ad_hcy_hydrolase"/>
    <property type="match status" value="1"/>
</dbReference>
<dbReference type="SMART" id="SM00996">
    <property type="entry name" value="AdoHcyase"/>
    <property type="match status" value="1"/>
</dbReference>
<dbReference type="SMART" id="SM00997">
    <property type="entry name" value="AdoHcyase_NAD"/>
    <property type="match status" value="1"/>
</dbReference>
<dbReference type="SUPFAM" id="SSF52283">
    <property type="entry name" value="Formate/glycerate dehydrogenase catalytic domain-like"/>
    <property type="match status" value="2"/>
</dbReference>
<dbReference type="SUPFAM" id="SSF51735">
    <property type="entry name" value="NAD(P)-binding Rossmann-fold domains"/>
    <property type="match status" value="1"/>
</dbReference>
<dbReference type="PROSITE" id="PS00738">
    <property type="entry name" value="ADOHCYASE_1"/>
    <property type="match status" value="1"/>
</dbReference>
<dbReference type="PROSITE" id="PS00739">
    <property type="entry name" value="ADOHCYASE_2"/>
    <property type="match status" value="1"/>
</dbReference>